<comment type="function">
    <text evidence="1">Specifically methylates guanosine-37 in various tRNAs.</text>
</comment>
<comment type="catalytic activity">
    <reaction evidence="1">
        <text>guanosine(37) in tRNA + S-adenosyl-L-methionine = N(1)-methylguanosine(37) in tRNA + S-adenosyl-L-homocysteine + H(+)</text>
        <dbReference type="Rhea" id="RHEA:36899"/>
        <dbReference type="Rhea" id="RHEA-COMP:10145"/>
        <dbReference type="Rhea" id="RHEA-COMP:10147"/>
        <dbReference type="ChEBI" id="CHEBI:15378"/>
        <dbReference type="ChEBI" id="CHEBI:57856"/>
        <dbReference type="ChEBI" id="CHEBI:59789"/>
        <dbReference type="ChEBI" id="CHEBI:73542"/>
        <dbReference type="ChEBI" id="CHEBI:74269"/>
        <dbReference type="EC" id="2.1.1.228"/>
    </reaction>
</comment>
<comment type="subunit">
    <text evidence="1">Homodimer.</text>
</comment>
<comment type="subcellular location">
    <subcellularLocation>
        <location evidence="1">Cytoplasm</location>
    </subcellularLocation>
</comment>
<comment type="similarity">
    <text evidence="1">Belongs to the RNA methyltransferase TrmD family.</text>
</comment>
<comment type="sequence caution" evidence="2">
    <conflict type="erroneous initiation">
        <sequence resource="EMBL-CDS" id="AAP77533"/>
    </conflict>
</comment>
<keyword id="KW-0963">Cytoplasm</keyword>
<keyword id="KW-0489">Methyltransferase</keyword>
<keyword id="KW-1185">Reference proteome</keyword>
<keyword id="KW-0949">S-adenosyl-L-methionine</keyword>
<keyword id="KW-0808">Transferase</keyword>
<keyword id="KW-0819">tRNA processing</keyword>
<reference key="1">
    <citation type="journal article" date="2003" name="Proc. Natl. Acad. Sci. U.S.A.">
        <title>The complete genome sequence of the carcinogenic bacterium Helicobacter hepaticus.</title>
        <authorList>
            <person name="Suerbaum S."/>
            <person name="Josenhans C."/>
            <person name="Sterzenbach T."/>
            <person name="Drescher B."/>
            <person name="Brandt P."/>
            <person name="Bell M."/>
            <person name="Droege M."/>
            <person name="Fartmann B."/>
            <person name="Fischer H.-P."/>
            <person name="Ge Z."/>
            <person name="Hoerster A."/>
            <person name="Holland R."/>
            <person name="Klein K."/>
            <person name="Koenig J."/>
            <person name="Macko L."/>
            <person name="Mendz G.L."/>
            <person name="Nyakatura G."/>
            <person name="Schauer D.B."/>
            <person name="Shen Z."/>
            <person name="Weber J."/>
            <person name="Frosch M."/>
            <person name="Fox J.G."/>
        </authorList>
    </citation>
    <scope>NUCLEOTIDE SEQUENCE [LARGE SCALE GENOMIC DNA]</scope>
    <source>
        <strain>ATCC 51449 / 3B1</strain>
    </source>
</reference>
<accession>Q7U321</accession>
<sequence>MQFSFLTLFPTLIESYFTDSILKRALQNGLISVEALNIRDYALDKYQKVDEPPISGGAGQVIRADVLGAALQTLTHSHIIFLSPCGKPFQQYDALRLSHKKHITFVCGRYEGFDERLVEQYANEVMSVGNFIVTGGELPALMLCDSIARHIQGVLGNADSLQGESFEDYLLEAPNFTKIFNQKIKFSATPSEYSKGNHSKISGLKKRLAICKTKYFRPDLYQAYRVFIEQQQLNNKVVK</sequence>
<name>TRMD_HELHP</name>
<dbReference type="EC" id="2.1.1.228" evidence="1"/>
<dbReference type="EMBL" id="AE017125">
    <property type="protein sequence ID" value="AAP77533.1"/>
    <property type="status" value="ALT_INIT"/>
    <property type="molecule type" value="Genomic_DNA"/>
</dbReference>
<dbReference type="RefSeq" id="WP_041309318.1">
    <property type="nucleotide sequence ID" value="NC_004917.1"/>
</dbReference>
<dbReference type="SMR" id="Q7U321"/>
<dbReference type="STRING" id="235279.HH_0936"/>
<dbReference type="KEGG" id="hhe:HH_0936"/>
<dbReference type="eggNOG" id="COG0336">
    <property type="taxonomic scope" value="Bacteria"/>
</dbReference>
<dbReference type="HOGENOM" id="CLU_047363_0_1_7"/>
<dbReference type="OrthoDB" id="9807416at2"/>
<dbReference type="Proteomes" id="UP000002495">
    <property type="component" value="Chromosome"/>
</dbReference>
<dbReference type="GO" id="GO:0005829">
    <property type="term" value="C:cytosol"/>
    <property type="evidence" value="ECO:0007669"/>
    <property type="project" value="TreeGrafter"/>
</dbReference>
<dbReference type="GO" id="GO:0052906">
    <property type="term" value="F:tRNA (guanine(37)-N1)-methyltransferase activity"/>
    <property type="evidence" value="ECO:0007669"/>
    <property type="project" value="UniProtKB-UniRule"/>
</dbReference>
<dbReference type="GO" id="GO:0002939">
    <property type="term" value="P:tRNA N1-guanine methylation"/>
    <property type="evidence" value="ECO:0007669"/>
    <property type="project" value="TreeGrafter"/>
</dbReference>
<dbReference type="CDD" id="cd18080">
    <property type="entry name" value="TrmD-like"/>
    <property type="match status" value="1"/>
</dbReference>
<dbReference type="Gene3D" id="3.40.1280.10">
    <property type="match status" value="1"/>
</dbReference>
<dbReference type="Gene3D" id="1.10.1270.20">
    <property type="entry name" value="tRNA(m1g37)methyltransferase, domain 2"/>
    <property type="match status" value="1"/>
</dbReference>
<dbReference type="HAMAP" id="MF_00605">
    <property type="entry name" value="TrmD"/>
    <property type="match status" value="1"/>
</dbReference>
<dbReference type="InterPro" id="IPR029028">
    <property type="entry name" value="Alpha/beta_knot_MTases"/>
</dbReference>
<dbReference type="InterPro" id="IPR023148">
    <property type="entry name" value="tRNA_m1G_MeTrfase_C_sf"/>
</dbReference>
<dbReference type="InterPro" id="IPR002649">
    <property type="entry name" value="tRNA_m1G_MeTrfase_TrmD"/>
</dbReference>
<dbReference type="InterPro" id="IPR029026">
    <property type="entry name" value="tRNA_m1G_MTases_N"/>
</dbReference>
<dbReference type="InterPro" id="IPR016009">
    <property type="entry name" value="tRNA_MeTrfase_TRMD/TRM10"/>
</dbReference>
<dbReference type="NCBIfam" id="NF000648">
    <property type="entry name" value="PRK00026.1"/>
    <property type="match status" value="1"/>
</dbReference>
<dbReference type="NCBIfam" id="TIGR00088">
    <property type="entry name" value="trmD"/>
    <property type="match status" value="1"/>
</dbReference>
<dbReference type="PANTHER" id="PTHR46417">
    <property type="entry name" value="TRNA (GUANINE-N(1)-)-METHYLTRANSFERASE"/>
    <property type="match status" value="1"/>
</dbReference>
<dbReference type="PANTHER" id="PTHR46417:SF1">
    <property type="entry name" value="TRNA (GUANINE-N(1)-)-METHYLTRANSFERASE"/>
    <property type="match status" value="1"/>
</dbReference>
<dbReference type="Pfam" id="PF01746">
    <property type="entry name" value="tRNA_m1G_MT"/>
    <property type="match status" value="1"/>
</dbReference>
<dbReference type="PIRSF" id="PIRSF000386">
    <property type="entry name" value="tRNA_mtase"/>
    <property type="match status" value="1"/>
</dbReference>
<dbReference type="SUPFAM" id="SSF75217">
    <property type="entry name" value="alpha/beta knot"/>
    <property type="match status" value="1"/>
</dbReference>
<evidence type="ECO:0000255" key="1">
    <source>
        <dbReference type="HAMAP-Rule" id="MF_00605"/>
    </source>
</evidence>
<evidence type="ECO:0000305" key="2"/>
<protein>
    <recommendedName>
        <fullName evidence="1">tRNA (guanine-N(1)-)-methyltransferase</fullName>
        <ecNumber evidence="1">2.1.1.228</ecNumber>
    </recommendedName>
    <alternativeName>
        <fullName evidence="1">M1G-methyltransferase</fullName>
    </alternativeName>
    <alternativeName>
        <fullName evidence="1">tRNA [GM37] methyltransferase</fullName>
    </alternativeName>
</protein>
<organism>
    <name type="scientific">Helicobacter hepaticus (strain ATCC 51449 / 3B1)</name>
    <dbReference type="NCBI Taxonomy" id="235279"/>
    <lineage>
        <taxon>Bacteria</taxon>
        <taxon>Pseudomonadati</taxon>
        <taxon>Campylobacterota</taxon>
        <taxon>Epsilonproteobacteria</taxon>
        <taxon>Campylobacterales</taxon>
        <taxon>Helicobacteraceae</taxon>
        <taxon>Helicobacter</taxon>
    </lineage>
</organism>
<proteinExistence type="inferred from homology"/>
<feature type="chain" id="PRO_0000060387" description="tRNA (guanine-N(1)-)-methyltransferase">
    <location>
        <begin position="1"/>
        <end position="239"/>
    </location>
</feature>
<feature type="binding site" evidence="1">
    <location>
        <position position="108"/>
    </location>
    <ligand>
        <name>S-adenosyl-L-methionine</name>
        <dbReference type="ChEBI" id="CHEBI:59789"/>
    </ligand>
</feature>
<feature type="binding site" evidence="1">
    <location>
        <begin position="128"/>
        <end position="133"/>
    </location>
    <ligand>
        <name>S-adenosyl-L-methionine</name>
        <dbReference type="ChEBI" id="CHEBI:59789"/>
    </ligand>
</feature>
<gene>
    <name evidence="1" type="primary">trmD</name>
    <name type="ordered locus">HH_0936</name>
</gene>